<comment type="function">
    <text evidence="1">Plays an important role in the de novo pathway of purine nucleotide biosynthesis. Catalyzes the first committed step in the biosynthesis of AMP from IMP.</text>
</comment>
<comment type="catalytic activity">
    <reaction evidence="1">
        <text>IMP + L-aspartate + GTP = N(6)-(1,2-dicarboxyethyl)-AMP + GDP + phosphate + 2 H(+)</text>
        <dbReference type="Rhea" id="RHEA:15753"/>
        <dbReference type="ChEBI" id="CHEBI:15378"/>
        <dbReference type="ChEBI" id="CHEBI:29991"/>
        <dbReference type="ChEBI" id="CHEBI:37565"/>
        <dbReference type="ChEBI" id="CHEBI:43474"/>
        <dbReference type="ChEBI" id="CHEBI:57567"/>
        <dbReference type="ChEBI" id="CHEBI:58053"/>
        <dbReference type="ChEBI" id="CHEBI:58189"/>
        <dbReference type="EC" id="6.3.4.4"/>
    </reaction>
</comment>
<comment type="cofactor">
    <cofactor evidence="1">
        <name>Mg(2+)</name>
        <dbReference type="ChEBI" id="CHEBI:18420"/>
    </cofactor>
    <text evidence="1">Binds 1 Mg(2+) ion per subunit.</text>
</comment>
<comment type="pathway">
    <text evidence="1">Purine metabolism; AMP biosynthesis via de novo pathway; AMP from IMP: step 1/2.</text>
</comment>
<comment type="subunit">
    <text evidence="1">Homodimer.</text>
</comment>
<comment type="subcellular location">
    <subcellularLocation>
        <location evidence="1">Cytoplasm</location>
    </subcellularLocation>
</comment>
<comment type="similarity">
    <text evidence="1">Belongs to the adenylosuccinate synthetase family.</text>
</comment>
<name>PURA_PSEPF</name>
<keyword id="KW-0963">Cytoplasm</keyword>
<keyword id="KW-0342">GTP-binding</keyword>
<keyword id="KW-0436">Ligase</keyword>
<keyword id="KW-0460">Magnesium</keyword>
<keyword id="KW-0479">Metal-binding</keyword>
<keyword id="KW-0547">Nucleotide-binding</keyword>
<keyword id="KW-0658">Purine biosynthesis</keyword>
<organism>
    <name type="scientific">Pseudomonas fluorescens (strain Pf0-1)</name>
    <dbReference type="NCBI Taxonomy" id="205922"/>
    <lineage>
        <taxon>Bacteria</taxon>
        <taxon>Pseudomonadati</taxon>
        <taxon>Pseudomonadota</taxon>
        <taxon>Gammaproteobacteria</taxon>
        <taxon>Pseudomonadales</taxon>
        <taxon>Pseudomonadaceae</taxon>
        <taxon>Pseudomonas</taxon>
    </lineage>
</organism>
<protein>
    <recommendedName>
        <fullName evidence="1">Adenylosuccinate synthetase</fullName>
        <shortName evidence="1">AMPSase</shortName>
        <shortName evidence="1">AdSS</shortName>
        <ecNumber evidence="1">6.3.4.4</ecNumber>
    </recommendedName>
    <alternativeName>
        <fullName evidence="1">IMP--aspartate ligase</fullName>
    </alternativeName>
</protein>
<accession>Q3KIY4</accession>
<gene>
    <name evidence="1" type="primary">purA</name>
    <name type="ordered locus">Pfl01_0528</name>
</gene>
<reference key="1">
    <citation type="journal article" date="2009" name="Genome Biol.">
        <title>Genomic and genetic analyses of diversity and plant interactions of Pseudomonas fluorescens.</title>
        <authorList>
            <person name="Silby M.W."/>
            <person name="Cerdeno-Tarraga A.M."/>
            <person name="Vernikos G.S."/>
            <person name="Giddens S.R."/>
            <person name="Jackson R.W."/>
            <person name="Preston G.M."/>
            <person name="Zhang X.-X."/>
            <person name="Moon C.D."/>
            <person name="Gehrig S.M."/>
            <person name="Godfrey S.A.C."/>
            <person name="Knight C.G."/>
            <person name="Malone J.G."/>
            <person name="Robinson Z."/>
            <person name="Spiers A.J."/>
            <person name="Harris S."/>
            <person name="Challis G.L."/>
            <person name="Yaxley A.M."/>
            <person name="Harris D."/>
            <person name="Seeger K."/>
            <person name="Murphy L."/>
            <person name="Rutter S."/>
            <person name="Squares R."/>
            <person name="Quail M.A."/>
            <person name="Saunders E."/>
            <person name="Mavromatis K."/>
            <person name="Brettin T.S."/>
            <person name="Bentley S.D."/>
            <person name="Hothersall J."/>
            <person name="Stephens E."/>
            <person name="Thomas C.M."/>
            <person name="Parkhill J."/>
            <person name="Levy S.B."/>
            <person name="Rainey P.B."/>
            <person name="Thomson N.R."/>
        </authorList>
    </citation>
    <scope>NUCLEOTIDE SEQUENCE [LARGE SCALE GENOMIC DNA]</scope>
    <source>
        <strain>Pf0-1</strain>
    </source>
</reference>
<sequence>MGKNVVVLGTQWGDEGKGKIVDLLTEHAAAVVRYQGGHNAGHTLVIDGEKTVLHLIPSGVLREGVQCLIGNGVVVAPDALLREITKLEEKGVPVRERLRISPSCPLILSFHVALDQAREKARGELKIGTTGRGIGPAYEDKVARRGLRVGDLLNMPRFEDKLRELVDYHNFMLVGYYKEPAIEFEKTLAECKEYAELLKPLMLDVTAELHDLRRAGKDIMFEGAQGSLLDIDHGTYPYVTSSNTTAGGVATGSGVGPMFLDYILGITKAYTTRVGSGPFPTELFDEVGAHLAKQGHEFGATTGRARRCGWFDAVILRRAIDVNSISGICLTKLDVLDGLETINICTGYKDAQGNAVAPTDADSYVGLQPVYEEVPGWSESTVGAKTLEELPANARAYIKRVEELIGAPIDIISTGPDRNETIVLRHPFA</sequence>
<feature type="chain" id="PRO_0000224308" description="Adenylosuccinate synthetase">
    <location>
        <begin position="1"/>
        <end position="429"/>
    </location>
</feature>
<feature type="active site" description="Proton acceptor" evidence="1">
    <location>
        <position position="14"/>
    </location>
</feature>
<feature type="active site" description="Proton donor" evidence="1">
    <location>
        <position position="42"/>
    </location>
</feature>
<feature type="binding site" evidence="1">
    <location>
        <begin position="13"/>
        <end position="19"/>
    </location>
    <ligand>
        <name>GTP</name>
        <dbReference type="ChEBI" id="CHEBI:37565"/>
    </ligand>
</feature>
<feature type="binding site" description="in other chain" evidence="1">
    <location>
        <begin position="14"/>
        <end position="17"/>
    </location>
    <ligand>
        <name>IMP</name>
        <dbReference type="ChEBI" id="CHEBI:58053"/>
        <note>ligand shared between dimeric partners</note>
    </ligand>
</feature>
<feature type="binding site" evidence="1">
    <location>
        <position position="14"/>
    </location>
    <ligand>
        <name>Mg(2+)</name>
        <dbReference type="ChEBI" id="CHEBI:18420"/>
    </ligand>
</feature>
<feature type="binding site" description="in other chain" evidence="1">
    <location>
        <begin position="39"/>
        <end position="42"/>
    </location>
    <ligand>
        <name>IMP</name>
        <dbReference type="ChEBI" id="CHEBI:58053"/>
        <note>ligand shared between dimeric partners</note>
    </ligand>
</feature>
<feature type="binding site" evidence="1">
    <location>
        <begin position="41"/>
        <end position="43"/>
    </location>
    <ligand>
        <name>GTP</name>
        <dbReference type="ChEBI" id="CHEBI:37565"/>
    </ligand>
</feature>
<feature type="binding site" evidence="1">
    <location>
        <position position="41"/>
    </location>
    <ligand>
        <name>Mg(2+)</name>
        <dbReference type="ChEBI" id="CHEBI:18420"/>
    </ligand>
</feature>
<feature type="binding site" description="in other chain" evidence="1">
    <location>
        <position position="130"/>
    </location>
    <ligand>
        <name>IMP</name>
        <dbReference type="ChEBI" id="CHEBI:58053"/>
        <note>ligand shared between dimeric partners</note>
    </ligand>
</feature>
<feature type="binding site" evidence="1">
    <location>
        <position position="144"/>
    </location>
    <ligand>
        <name>IMP</name>
        <dbReference type="ChEBI" id="CHEBI:58053"/>
        <note>ligand shared between dimeric partners</note>
    </ligand>
</feature>
<feature type="binding site" description="in other chain" evidence="1">
    <location>
        <position position="225"/>
    </location>
    <ligand>
        <name>IMP</name>
        <dbReference type="ChEBI" id="CHEBI:58053"/>
        <note>ligand shared between dimeric partners</note>
    </ligand>
</feature>
<feature type="binding site" description="in other chain" evidence="1">
    <location>
        <position position="240"/>
    </location>
    <ligand>
        <name>IMP</name>
        <dbReference type="ChEBI" id="CHEBI:58053"/>
        <note>ligand shared between dimeric partners</note>
    </ligand>
</feature>
<feature type="binding site" evidence="1">
    <location>
        <begin position="300"/>
        <end position="306"/>
    </location>
    <ligand>
        <name>substrate</name>
    </ligand>
</feature>
<feature type="binding site" description="in other chain" evidence="1">
    <location>
        <position position="304"/>
    </location>
    <ligand>
        <name>IMP</name>
        <dbReference type="ChEBI" id="CHEBI:58053"/>
        <note>ligand shared between dimeric partners</note>
    </ligand>
</feature>
<feature type="binding site" evidence="1">
    <location>
        <position position="306"/>
    </location>
    <ligand>
        <name>GTP</name>
        <dbReference type="ChEBI" id="CHEBI:37565"/>
    </ligand>
</feature>
<feature type="binding site" evidence="1">
    <location>
        <begin position="332"/>
        <end position="334"/>
    </location>
    <ligand>
        <name>GTP</name>
        <dbReference type="ChEBI" id="CHEBI:37565"/>
    </ligand>
</feature>
<feature type="binding site" evidence="1">
    <location>
        <begin position="413"/>
        <end position="415"/>
    </location>
    <ligand>
        <name>GTP</name>
        <dbReference type="ChEBI" id="CHEBI:37565"/>
    </ligand>
</feature>
<proteinExistence type="inferred from homology"/>
<dbReference type="EC" id="6.3.4.4" evidence="1"/>
<dbReference type="EMBL" id="CP000094">
    <property type="protein sequence ID" value="ABA72272.1"/>
    <property type="molecule type" value="Genomic_DNA"/>
</dbReference>
<dbReference type="RefSeq" id="WP_011332187.1">
    <property type="nucleotide sequence ID" value="NC_007492.2"/>
</dbReference>
<dbReference type="SMR" id="Q3KIY4"/>
<dbReference type="KEGG" id="pfo:Pfl01_0528"/>
<dbReference type="eggNOG" id="COG0104">
    <property type="taxonomic scope" value="Bacteria"/>
</dbReference>
<dbReference type="HOGENOM" id="CLU_029848_0_0_6"/>
<dbReference type="UniPathway" id="UPA00075">
    <property type="reaction ID" value="UER00335"/>
</dbReference>
<dbReference type="Proteomes" id="UP000002704">
    <property type="component" value="Chromosome"/>
</dbReference>
<dbReference type="GO" id="GO:0005737">
    <property type="term" value="C:cytoplasm"/>
    <property type="evidence" value="ECO:0007669"/>
    <property type="project" value="UniProtKB-SubCell"/>
</dbReference>
<dbReference type="GO" id="GO:0004019">
    <property type="term" value="F:adenylosuccinate synthase activity"/>
    <property type="evidence" value="ECO:0007669"/>
    <property type="project" value="UniProtKB-UniRule"/>
</dbReference>
<dbReference type="GO" id="GO:0005525">
    <property type="term" value="F:GTP binding"/>
    <property type="evidence" value="ECO:0007669"/>
    <property type="project" value="UniProtKB-UniRule"/>
</dbReference>
<dbReference type="GO" id="GO:0000287">
    <property type="term" value="F:magnesium ion binding"/>
    <property type="evidence" value="ECO:0007669"/>
    <property type="project" value="UniProtKB-UniRule"/>
</dbReference>
<dbReference type="GO" id="GO:0044208">
    <property type="term" value="P:'de novo' AMP biosynthetic process"/>
    <property type="evidence" value="ECO:0007669"/>
    <property type="project" value="UniProtKB-UniRule"/>
</dbReference>
<dbReference type="GO" id="GO:0046040">
    <property type="term" value="P:IMP metabolic process"/>
    <property type="evidence" value="ECO:0007669"/>
    <property type="project" value="TreeGrafter"/>
</dbReference>
<dbReference type="CDD" id="cd03108">
    <property type="entry name" value="AdSS"/>
    <property type="match status" value="1"/>
</dbReference>
<dbReference type="FunFam" id="1.10.300.10:FF:000001">
    <property type="entry name" value="Adenylosuccinate synthetase"/>
    <property type="match status" value="1"/>
</dbReference>
<dbReference type="FunFam" id="3.90.170.10:FF:000001">
    <property type="entry name" value="Adenylosuccinate synthetase"/>
    <property type="match status" value="1"/>
</dbReference>
<dbReference type="Gene3D" id="3.40.440.10">
    <property type="entry name" value="Adenylosuccinate Synthetase, subunit A, domain 1"/>
    <property type="match status" value="1"/>
</dbReference>
<dbReference type="Gene3D" id="1.10.300.10">
    <property type="entry name" value="Adenylosuccinate Synthetase, subunit A, domain 2"/>
    <property type="match status" value="1"/>
</dbReference>
<dbReference type="Gene3D" id="3.90.170.10">
    <property type="entry name" value="Adenylosuccinate Synthetase, subunit A, domain 3"/>
    <property type="match status" value="1"/>
</dbReference>
<dbReference type="HAMAP" id="MF_00011">
    <property type="entry name" value="Adenylosucc_synth"/>
    <property type="match status" value="1"/>
</dbReference>
<dbReference type="InterPro" id="IPR018220">
    <property type="entry name" value="Adenylosuccin_syn_GTP-bd"/>
</dbReference>
<dbReference type="InterPro" id="IPR033128">
    <property type="entry name" value="Adenylosuccin_syn_Lys_AS"/>
</dbReference>
<dbReference type="InterPro" id="IPR042109">
    <property type="entry name" value="Adenylosuccinate_synth_dom1"/>
</dbReference>
<dbReference type="InterPro" id="IPR042110">
    <property type="entry name" value="Adenylosuccinate_synth_dom2"/>
</dbReference>
<dbReference type="InterPro" id="IPR042111">
    <property type="entry name" value="Adenylosuccinate_synth_dom3"/>
</dbReference>
<dbReference type="InterPro" id="IPR001114">
    <property type="entry name" value="Adenylosuccinate_synthetase"/>
</dbReference>
<dbReference type="InterPro" id="IPR027417">
    <property type="entry name" value="P-loop_NTPase"/>
</dbReference>
<dbReference type="NCBIfam" id="NF002223">
    <property type="entry name" value="PRK01117.1"/>
    <property type="match status" value="1"/>
</dbReference>
<dbReference type="NCBIfam" id="TIGR00184">
    <property type="entry name" value="purA"/>
    <property type="match status" value="1"/>
</dbReference>
<dbReference type="PANTHER" id="PTHR11846">
    <property type="entry name" value="ADENYLOSUCCINATE SYNTHETASE"/>
    <property type="match status" value="1"/>
</dbReference>
<dbReference type="PANTHER" id="PTHR11846:SF0">
    <property type="entry name" value="ADENYLOSUCCINATE SYNTHETASE"/>
    <property type="match status" value="1"/>
</dbReference>
<dbReference type="Pfam" id="PF00709">
    <property type="entry name" value="Adenylsucc_synt"/>
    <property type="match status" value="1"/>
</dbReference>
<dbReference type="SMART" id="SM00788">
    <property type="entry name" value="Adenylsucc_synt"/>
    <property type="match status" value="1"/>
</dbReference>
<dbReference type="SUPFAM" id="SSF52540">
    <property type="entry name" value="P-loop containing nucleoside triphosphate hydrolases"/>
    <property type="match status" value="1"/>
</dbReference>
<dbReference type="PROSITE" id="PS01266">
    <property type="entry name" value="ADENYLOSUCCIN_SYN_1"/>
    <property type="match status" value="1"/>
</dbReference>
<dbReference type="PROSITE" id="PS00513">
    <property type="entry name" value="ADENYLOSUCCIN_SYN_2"/>
    <property type="match status" value="1"/>
</dbReference>
<evidence type="ECO:0000255" key="1">
    <source>
        <dbReference type="HAMAP-Rule" id="MF_00011"/>
    </source>
</evidence>